<dbReference type="SMR" id="P0CG46"/>
<dbReference type="ConoServer" id="4202">
    <property type="toxin name" value="Conantokin-Su precursor"/>
</dbReference>
<dbReference type="GO" id="GO:0005576">
    <property type="term" value="C:extracellular region"/>
    <property type="evidence" value="ECO:0007669"/>
    <property type="project" value="UniProtKB-SubCell"/>
</dbReference>
<dbReference type="GO" id="GO:0035792">
    <property type="term" value="C:host cell postsynaptic membrane"/>
    <property type="evidence" value="ECO:0007669"/>
    <property type="project" value="UniProtKB-KW"/>
</dbReference>
<dbReference type="GO" id="GO:0099106">
    <property type="term" value="F:ion channel regulator activity"/>
    <property type="evidence" value="ECO:0007669"/>
    <property type="project" value="UniProtKB-KW"/>
</dbReference>
<dbReference type="GO" id="GO:0046872">
    <property type="term" value="F:metal ion binding"/>
    <property type="evidence" value="ECO:0007669"/>
    <property type="project" value="UniProtKB-KW"/>
</dbReference>
<dbReference type="GO" id="GO:0090729">
    <property type="term" value="F:toxin activity"/>
    <property type="evidence" value="ECO:0007669"/>
    <property type="project" value="UniProtKB-KW"/>
</dbReference>
<dbReference type="InterPro" id="IPR005918">
    <property type="entry name" value="Conantokin_CS"/>
</dbReference>
<dbReference type="Pfam" id="PF10550">
    <property type="entry name" value="Toxin_36"/>
    <property type="match status" value="1"/>
</dbReference>
<keyword id="KW-0106">Calcium</keyword>
<keyword id="KW-0301">Gamma-carboxyglutamic acid</keyword>
<keyword id="KW-0872">Ion channel impairing toxin</keyword>
<keyword id="KW-1028">Ionotropic glutamate receptor inhibitor</keyword>
<keyword id="KW-0460">Magnesium</keyword>
<keyword id="KW-0479">Metal-binding</keyword>
<keyword id="KW-0528">Neurotoxin</keyword>
<keyword id="KW-0629">Postsynaptic neurotoxin</keyword>
<keyword id="KW-0964">Secreted</keyword>
<keyword id="KW-0732">Signal</keyword>
<keyword id="KW-0800">Toxin</keyword>
<name>CKBR_CONSL</name>
<protein>
    <recommendedName>
        <fullName evidence="8">Conantokin-Br</fullName>
        <shortName evidence="8">Con-Br</shortName>
        <shortName evidence="9">ConBr</shortName>
    </recommendedName>
    <alternativeName>
        <fullName evidence="7">Conantoxin-S1</fullName>
        <shortName evidence="7">Con-S1</shortName>
    </alternativeName>
</protein>
<feature type="signal peptide" evidence="4">
    <location>
        <begin position="1"/>
        <end position="21"/>
    </location>
</feature>
<feature type="propeptide" id="PRO_0000395614" evidence="10">
    <location>
        <begin position="22"/>
        <end position="79"/>
    </location>
</feature>
<feature type="peptide" id="PRO_0000395615" description="Conantokin-Br" evidence="10">
    <location>
        <begin position="80"/>
        <end position="103"/>
    </location>
</feature>
<feature type="region of interest" description="Disordered" evidence="5">
    <location>
        <begin position="34"/>
        <end position="64"/>
    </location>
</feature>
<feature type="compositionally biased region" description="Basic and acidic residues" evidence="5">
    <location>
        <begin position="55"/>
        <end position="64"/>
    </location>
</feature>
<feature type="binding site" description="via 4-carboxyglutamate" evidence="2">
    <location>
        <position position="89"/>
    </location>
    <ligand>
        <name>a divalent metal cation</name>
        <dbReference type="ChEBI" id="CHEBI:60240"/>
    </ligand>
</feature>
<feature type="binding site" description="via 4-carboxyglutamate" evidence="2">
    <location>
        <position position="93"/>
    </location>
    <ligand>
        <name>a divalent metal cation</name>
        <dbReference type="ChEBI" id="CHEBI:60240"/>
    </ligand>
</feature>
<feature type="site" description="Significant for the subtype selectivity between NR2B/GRIN2B and NR2D/GRIN2D (similar potency for both of them)" evidence="10">
    <location>
        <position position="84"/>
    </location>
</feature>
<feature type="modified residue" description="4-carboxyglutamate" evidence="2 10">
    <location>
        <position position="82"/>
    </location>
</feature>
<feature type="modified residue" description="4-carboxyglutamate" evidence="2 10">
    <location>
        <position position="83"/>
    </location>
</feature>
<feature type="modified residue" description="4-carboxyglutamate" evidence="2 10">
    <location>
        <position position="89"/>
    </location>
</feature>
<feature type="modified residue" description="4-carboxyglutamate" evidence="2 10">
    <location>
        <position position="93"/>
    </location>
</feature>
<feature type="mutagenesis site" description="37-fold decrease in potency for NR2B/GRIN2B with a relative increase in selectivity for this subunit; complete decrease in potency for NR2D/GRIN2D." evidence="6">
    <original>YS</original>
    <variation>VA</variation>
    <location>
        <begin position="84"/>
        <end position="85"/>
    </location>
</feature>
<feature type="mutagenesis site" description="23-fold decrease in potency for NR2B/GRIN2B with a relative increase in selectivity for this subunit; complete decrease in potency for NR2D/GRIN2D." evidence="6">
    <original>Y</original>
    <variation>V</variation>
    <location>
        <position position="84"/>
    </location>
</feature>
<feature type="mutagenesis site" description="Important decrease in potency for NR2B/GRIN2B; complete decrease in potency for NR2D/GRIN2D." evidence="6">
    <original>FI</original>
    <variation>MAA</variation>
    <location>
        <begin position="87"/>
        <end position="88"/>
    </location>
</feature>
<proteinExistence type="evidence at protein level"/>
<accession>P0CG46</accession>
<evidence type="ECO:0000250" key="1"/>
<evidence type="ECO:0000250" key="2">
    <source>
        <dbReference type="UniProtKB" id="P07231"/>
    </source>
</evidence>
<evidence type="ECO:0000250" key="3">
    <source>
        <dbReference type="UniProtKB" id="P58806"/>
    </source>
</evidence>
<evidence type="ECO:0000255" key="4"/>
<evidence type="ECO:0000256" key="5">
    <source>
        <dbReference type="SAM" id="MobiDB-lite"/>
    </source>
</evidence>
<evidence type="ECO:0000269" key="6">
    <source>
    </source>
</evidence>
<evidence type="ECO:0000303" key="7">
    <source>
    </source>
</evidence>
<evidence type="ECO:0000303" key="8">
    <source>
    </source>
</evidence>
<evidence type="ECO:0000305" key="9"/>
<evidence type="ECO:0000305" key="10">
    <source>
    </source>
</evidence>
<organism>
    <name type="scientific">Conus sulcatus</name>
    <name type="common">Sulcate cone</name>
    <dbReference type="NCBI Taxonomy" id="101760"/>
    <lineage>
        <taxon>Eukaryota</taxon>
        <taxon>Metazoa</taxon>
        <taxon>Spiralia</taxon>
        <taxon>Lophotrochozoa</taxon>
        <taxon>Mollusca</taxon>
        <taxon>Gastropoda</taxon>
        <taxon>Caenogastropoda</taxon>
        <taxon>Neogastropoda</taxon>
        <taxon>Conoidea</taxon>
        <taxon>Conidae</taxon>
        <taxon>Conus</taxon>
        <taxon>Asprella</taxon>
    </lineage>
</organism>
<sequence length="103" mass="11708">MQLYTYLYLLVPLVTFHLILGTGTLDHGGALTERRSTDATALKPEPVLQKSAARSTDDNGKDRLTQMKRILKKRGKNARGDEEYSKFIEREREAGRLDLSKFP</sequence>
<reference key="1">
    <citation type="journal article" date="2009" name="Biochemistry">
        <title>Conantokin-Br from Conus brettinghami and selectivity determinants for the NR2D subunit of the NMDA receptor.</title>
        <authorList>
            <person name="Twede V.D."/>
            <person name="Teichert R.W."/>
            <person name="Walker C.S."/>
            <person name="Gruszczynski P."/>
            <person name="Kazmierkiewicz R."/>
            <person name="Bulaj G."/>
            <person name="Olivera B.M."/>
        </authorList>
    </citation>
    <scope>NUCLEOTIDE SEQUENCE [MRNA]</scope>
    <scope>SYNTHESIS OF 80-103</scope>
    <scope>FUNCTION</scope>
    <scope>MUTAGENESIS OF 87-PHE-ILE-88; 84-TYR-SER-85 AND TYR-84</scope>
    <scope>SITE</scope>
    <scope>MOLECULAR MODELING</scope>
    <scope>GAMMA-CARBOXYGLUTAMATION AT GLU-82; GLU-83; GLU-89 AND GLU-93</scope>
    <source>
        <strain>Conus sulcatus brettingham</strain>
        <tissue>Venom duct</tissue>
    </source>
</reference>
<reference key="2">
    <citation type="journal article" date="2006" name="Prog. Mol. Subcell. Biol.">
        <title>Hyperhydroxylation: a new strategy for neuronal targeting by venomous marine molluscs.</title>
        <authorList>
            <person name="Franco A."/>
            <person name="Pisarewicz K."/>
            <person name="Moller C."/>
            <person name="Mora D."/>
            <person name="Fields G.B."/>
            <person name="Mari F."/>
        </authorList>
    </citation>
    <scope>NOMENCLATURE</scope>
</reference>
<comment type="function">
    <text evidence="6">Conantokins inhibit N-methyl-D-aspartate (NMDA) receptors. This toxin inhibits NR2 subunits N-methyl-D-aspartate (NMDA) receptor-mediated calcium influx in central nervous system neurons in the following order of preference: NR2B/GRIN2B (IC(50)=0.14 uM), NR2D/GRIN2D (IC(50)=0.31 uM), NR2A/GRIN2A (IC(50)=0.68 uM) and NR2C/GRIN2A (IC(50)=4.9 uM), when tested on rat receptors.</text>
</comment>
<comment type="cofactor">
    <cofactor evidence="3">
        <name>Ca(2+)</name>
        <dbReference type="ChEBI" id="CHEBI:29108"/>
    </cofactor>
    <cofactor evidence="3">
        <name>Mg(2+)</name>
        <dbReference type="ChEBI" id="CHEBI:18420"/>
    </cofactor>
    <text evidence="3">Divalent cations stabilize the toxin the in alpha-helix conformation.</text>
</comment>
<comment type="subcellular location">
    <subcellularLocation>
        <location evidence="1">Secreted</location>
    </subcellularLocation>
</comment>
<comment type="tissue specificity">
    <text evidence="9">Expressed by the venom duct.</text>
</comment>
<comment type="miscellaneous">
    <text>The mature peptide does not contain cysteine residue.</text>
</comment>
<comment type="similarity">
    <text evidence="9">Belongs to the conotoxin B superfamily.</text>
</comment>